<gene>
    <name evidence="1" type="primary">rbsD</name>
    <name type="ordered locus">LL1638</name>
    <name type="ORF">L85737</name>
</gene>
<comment type="function">
    <text evidence="1">Catalyzes the interconversion of beta-pyran and beta-furan forms of D-ribose.</text>
</comment>
<comment type="catalytic activity">
    <reaction evidence="1">
        <text>beta-D-ribopyranose = beta-D-ribofuranose</text>
        <dbReference type="Rhea" id="RHEA:25432"/>
        <dbReference type="ChEBI" id="CHEBI:27476"/>
        <dbReference type="ChEBI" id="CHEBI:47002"/>
        <dbReference type="EC" id="5.4.99.62"/>
    </reaction>
</comment>
<comment type="pathway">
    <text evidence="1">Carbohydrate metabolism; D-ribose degradation; D-ribose 5-phosphate from beta-D-ribopyranose: step 1/2.</text>
</comment>
<comment type="subunit">
    <text evidence="1">Homodecamer.</text>
</comment>
<comment type="subcellular location">
    <subcellularLocation>
        <location evidence="1">Cytoplasm</location>
    </subcellularLocation>
</comment>
<comment type="similarity">
    <text evidence="1">Belongs to the RbsD / FucU family. RbsD subfamily.</text>
</comment>
<name>RBSD_LACLA</name>
<accession>Q9CF43</accession>
<feature type="chain" id="PRO_0000346224" description="D-ribose pyranase">
    <location>
        <begin position="1"/>
        <end position="132"/>
    </location>
</feature>
<feature type="active site" description="Proton donor" evidence="1">
    <location>
        <position position="20"/>
    </location>
</feature>
<feature type="binding site" evidence="1">
    <location>
        <position position="28"/>
    </location>
    <ligand>
        <name>substrate</name>
    </ligand>
</feature>
<feature type="binding site" evidence="1">
    <location>
        <position position="99"/>
    </location>
    <ligand>
        <name>substrate</name>
    </ligand>
</feature>
<feature type="binding site" evidence="1">
    <location>
        <begin position="121"/>
        <end position="123"/>
    </location>
    <ligand>
        <name>substrate</name>
    </ligand>
</feature>
<reference key="1">
    <citation type="journal article" date="2001" name="Genome Res.">
        <title>The complete genome sequence of the lactic acid bacterium Lactococcus lactis ssp. lactis IL1403.</title>
        <authorList>
            <person name="Bolotin A."/>
            <person name="Wincker P."/>
            <person name="Mauger S."/>
            <person name="Jaillon O."/>
            <person name="Malarme K."/>
            <person name="Weissenbach J."/>
            <person name="Ehrlich S.D."/>
            <person name="Sorokin A."/>
        </authorList>
    </citation>
    <scope>NUCLEOTIDE SEQUENCE [LARGE SCALE GENOMIC DNA]</scope>
    <source>
        <strain>IL1403</strain>
    </source>
</reference>
<keyword id="KW-0119">Carbohydrate metabolism</keyword>
<keyword id="KW-0963">Cytoplasm</keyword>
<keyword id="KW-0413">Isomerase</keyword>
<keyword id="KW-1185">Reference proteome</keyword>
<dbReference type="EC" id="5.4.99.62" evidence="1"/>
<dbReference type="EMBL" id="AE005176">
    <property type="protein sequence ID" value="AAK05736.1"/>
    <property type="molecule type" value="Genomic_DNA"/>
</dbReference>
<dbReference type="PIR" id="F86829">
    <property type="entry name" value="F86829"/>
</dbReference>
<dbReference type="RefSeq" id="NP_267794.1">
    <property type="nucleotide sequence ID" value="NC_002662.1"/>
</dbReference>
<dbReference type="RefSeq" id="WP_003129436.1">
    <property type="nucleotide sequence ID" value="NC_002662.1"/>
</dbReference>
<dbReference type="SMR" id="Q9CF43"/>
<dbReference type="PaxDb" id="272623-L85737"/>
<dbReference type="EnsemblBacteria" id="AAK05736">
    <property type="protein sequence ID" value="AAK05736"/>
    <property type="gene ID" value="L85737"/>
</dbReference>
<dbReference type="KEGG" id="lla:L85737"/>
<dbReference type="PATRIC" id="fig|272623.7.peg.1760"/>
<dbReference type="eggNOG" id="COG1869">
    <property type="taxonomic scope" value="Bacteria"/>
</dbReference>
<dbReference type="HOGENOM" id="CLU_135498_0_0_9"/>
<dbReference type="OrthoDB" id="9805009at2"/>
<dbReference type="UniPathway" id="UPA00916">
    <property type="reaction ID" value="UER00888"/>
</dbReference>
<dbReference type="Proteomes" id="UP000002196">
    <property type="component" value="Chromosome"/>
</dbReference>
<dbReference type="GO" id="GO:0005829">
    <property type="term" value="C:cytosol"/>
    <property type="evidence" value="ECO:0007669"/>
    <property type="project" value="TreeGrafter"/>
</dbReference>
<dbReference type="GO" id="GO:0062193">
    <property type="term" value="F:D-ribose pyranase activity"/>
    <property type="evidence" value="ECO:0007669"/>
    <property type="project" value="UniProtKB-EC"/>
</dbReference>
<dbReference type="GO" id="GO:0016872">
    <property type="term" value="F:intramolecular lyase activity"/>
    <property type="evidence" value="ECO:0007669"/>
    <property type="project" value="UniProtKB-UniRule"/>
</dbReference>
<dbReference type="GO" id="GO:0048029">
    <property type="term" value="F:monosaccharide binding"/>
    <property type="evidence" value="ECO:0007669"/>
    <property type="project" value="InterPro"/>
</dbReference>
<dbReference type="GO" id="GO:0019303">
    <property type="term" value="P:D-ribose catabolic process"/>
    <property type="evidence" value="ECO:0007669"/>
    <property type="project" value="UniProtKB-UniRule"/>
</dbReference>
<dbReference type="Gene3D" id="3.40.1650.10">
    <property type="entry name" value="RbsD-like domain"/>
    <property type="match status" value="1"/>
</dbReference>
<dbReference type="HAMAP" id="MF_01661">
    <property type="entry name" value="D_rib_pyranase"/>
    <property type="match status" value="1"/>
</dbReference>
<dbReference type="InterPro" id="IPR023064">
    <property type="entry name" value="D-ribose_pyranase"/>
</dbReference>
<dbReference type="InterPro" id="IPR023750">
    <property type="entry name" value="RbsD-like_sf"/>
</dbReference>
<dbReference type="InterPro" id="IPR007721">
    <property type="entry name" value="RbsD_FucU"/>
</dbReference>
<dbReference type="NCBIfam" id="NF008761">
    <property type="entry name" value="PRK11797.1"/>
    <property type="match status" value="1"/>
</dbReference>
<dbReference type="PANTHER" id="PTHR37831">
    <property type="entry name" value="D-RIBOSE PYRANASE"/>
    <property type="match status" value="1"/>
</dbReference>
<dbReference type="PANTHER" id="PTHR37831:SF1">
    <property type="entry name" value="D-RIBOSE PYRANASE"/>
    <property type="match status" value="1"/>
</dbReference>
<dbReference type="Pfam" id="PF05025">
    <property type="entry name" value="RbsD_FucU"/>
    <property type="match status" value="1"/>
</dbReference>
<dbReference type="SUPFAM" id="SSF102546">
    <property type="entry name" value="RbsD-like"/>
    <property type="match status" value="1"/>
</dbReference>
<evidence type="ECO:0000255" key="1">
    <source>
        <dbReference type="HAMAP-Rule" id="MF_01661"/>
    </source>
</evidence>
<sequence>MKKEGILNSELAKIADDLGHTDQVCIGDLGLPVPSGVKKIDLALTRGKPSFQEVLDIYLENILVEKVYLAEEIKENNPEQLAILLTKLSADVEIVFVSHETLKLMNHEVKAVVRTGENTPYSNIILQSGVAL</sequence>
<proteinExistence type="inferred from homology"/>
<organism>
    <name type="scientific">Lactococcus lactis subsp. lactis (strain IL1403)</name>
    <name type="common">Streptococcus lactis</name>
    <dbReference type="NCBI Taxonomy" id="272623"/>
    <lineage>
        <taxon>Bacteria</taxon>
        <taxon>Bacillati</taxon>
        <taxon>Bacillota</taxon>
        <taxon>Bacilli</taxon>
        <taxon>Lactobacillales</taxon>
        <taxon>Streptococcaceae</taxon>
        <taxon>Lactococcus</taxon>
    </lineage>
</organism>
<protein>
    <recommendedName>
        <fullName evidence="1">D-ribose pyranase</fullName>
        <ecNumber evidence="1">5.4.99.62</ecNumber>
    </recommendedName>
</protein>